<protein>
    <recommendedName>
        <fullName evidence="1">Protein translocase subunit SecA</fullName>
        <ecNumber evidence="1">7.4.2.8</ecNumber>
    </recommendedName>
</protein>
<accession>A6VYJ1</accession>
<dbReference type="EC" id="7.4.2.8" evidence="1"/>
<dbReference type="EMBL" id="CP000749">
    <property type="protein sequence ID" value="ABR71520.1"/>
    <property type="molecule type" value="Genomic_DNA"/>
</dbReference>
<dbReference type="SMR" id="A6VYJ1"/>
<dbReference type="STRING" id="400668.Mmwyl1_2607"/>
<dbReference type="KEGG" id="mmw:Mmwyl1_2607"/>
<dbReference type="eggNOG" id="COG0653">
    <property type="taxonomic scope" value="Bacteria"/>
</dbReference>
<dbReference type="HOGENOM" id="CLU_005314_3_0_6"/>
<dbReference type="OrthoDB" id="9805579at2"/>
<dbReference type="GO" id="GO:0031522">
    <property type="term" value="C:cell envelope Sec protein transport complex"/>
    <property type="evidence" value="ECO:0007669"/>
    <property type="project" value="TreeGrafter"/>
</dbReference>
<dbReference type="GO" id="GO:0005829">
    <property type="term" value="C:cytosol"/>
    <property type="evidence" value="ECO:0007669"/>
    <property type="project" value="TreeGrafter"/>
</dbReference>
<dbReference type="GO" id="GO:0005886">
    <property type="term" value="C:plasma membrane"/>
    <property type="evidence" value="ECO:0007669"/>
    <property type="project" value="UniProtKB-SubCell"/>
</dbReference>
<dbReference type="GO" id="GO:0005524">
    <property type="term" value="F:ATP binding"/>
    <property type="evidence" value="ECO:0007669"/>
    <property type="project" value="UniProtKB-UniRule"/>
</dbReference>
<dbReference type="GO" id="GO:0046872">
    <property type="term" value="F:metal ion binding"/>
    <property type="evidence" value="ECO:0007669"/>
    <property type="project" value="UniProtKB-KW"/>
</dbReference>
<dbReference type="GO" id="GO:0008564">
    <property type="term" value="F:protein-exporting ATPase activity"/>
    <property type="evidence" value="ECO:0007669"/>
    <property type="project" value="UniProtKB-EC"/>
</dbReference>
<dbReference type="GO" id="GO:0065002">
    <property type="term" value="P:intracellular protein transmembrane transport"/>
    <property type="evidence" value="ECO:0007669"/>
    <property type="project" value="UniProtKB-UniRule"/>
</dbReference>
<dbReference type="GO" id="GO:0017038">
    <property type="term" value="P:protein import"/>
    <property type="evidence" value="ECO:0007669"/>
    <property type="project" value="InterPro"/>
</dbReference>
<dbReference type="GO" id="GO:0006605">
    <property type="term" value="P:protein targeting"/>
    <property type="evidence" value="ECO:0007669"/>
    <property type="project" value="UniProtKB-UniRule"/>
</dbReference>
<dbReference type="GO" id="GO:0043952">
    <property type="term" value="P:protein transport by the Sec complex"/>
    <property type="evidence" value="ECO:0007669"/>
    <property type="project" value="TreeGrafter"/>
</dbReference>
<dbReference type="CDD" id="cd17928">
    <property type="entry name" value="DEXDc_SecA"/>
    <property type="match status" value="1"/>
</dbReference>
<dbReference type="CDD" id="cd18803">
    <property type="entry name" value="SF2_C_secA"/>
    <property type="match status" value="1"/>
</dbReference>
<dbReference type="FunFam" id="3.40.50.300:FF:000113">
    <property type="entry name" value="Preprotein translocase subunit SecA"/>
    <property type="match status" value="1"/>
</dbReference>
<dbReference type="FunFam" id="3.90.1440.10:FF:000001">
    <property type="entry name" value="Preprotein translocase subunit SecA"/>
    <property type="match status" value="1"/>
</dbReference>
<dbReference type="FunFam" id="1.10.3060.10:FF:000003">
    <property type="entry name" value="Protein translocase subunit SecA"/>
    <property type="match status" value="1"/>
</dbReference>
<dbReference type="Gene3D" id="1.10.3060.10">
    <property type="entry name" value="Helical scaffold and wing domains of SecA"/>
    <property type="match status" value="1"/>
</dbReference>
<dbReference type="Gene3D" id="3.40.50.300">
    <property type="entry name" value="P-loop containing nucleotide triphosphate hydrolases"/>
    <property type="match status" value="2"/>
</dbReference>
<dbReference type="Gene3D" id="3.90.1440.10">
    <property type="entry name" value="SecA, preprotein cross-linking domain"/>
    <property type="match status" value="1"/>
</dbReference>
<dbReference type="HAMAP" id="MF_01382">
    <property type="entry name" value="SecA"/>
    <property type="match status" value="1"/>
</dbReference>
<dbReference type="InterPro" id="IPR014001">
    <property type="entry name" value="Helicase_ATP-bd"/>
</dbReference>
<dbReference type="InterPro" id="IPR001650">
    <property type="entry name" value="Helicase_C-like"/>
</dbReference>
<dbReference type="InterPro" id="IPR027417">
    <property type="entry name" value="P-loop_NTPase"/>
</dbReference>
<dbReference type="InterPro" id="IPR004027">
    <property type="entry name" value="SEC_C_motif"/>
</dbReference>
<dbReference type="InterPro" id="IPR000185">
    <property type="entry name" value="SecA"/>
</dbReference>
<dbReference type="InterPro" id="IPR020937">
    <property type="entry name" value="SecA_CS"/>
</dbReference>
<dbReference type="InterPro" id="IPR011115">
    <property type="entry name" value="SecA_DEAD"/>
</dbReference>
<dbReference type="InterPro" id="IPR014018">
    <property type="entry name" value="SecA_motor_DEAD"/>
</dbReference>
<dbReference type="InterPro" id="IPR011130">
    <property type="entry name" value="SecA_preprotein_X-link_dom"/>
</dbReference>
<dbReference type="InterPro" id="IPR044722">
    <property type="entry name" value="SecA_SF2_C"/>
</dbReference>
<dbReference type="InterPro" id="IPR011116">
    <property type="entry name" value="SecA_Wing/Scaffold"/>
</dbReference>
<dbReference type="InterPro" id="IPR036266">
    <property type="entry name" value="SecA_Wing/Scaffold_sf"/>
</dbReference>
<dbReference type="InterPro" id="IPR036670">
    <property type="entry name" value="SecA_X-link_sf"/>
</dbReference>
<dbReference type="NCBIfam" id="NF009538">
    <property type="entry name" value="PRK12904.1"/>
    <property type="match status" value="1"/>
</dbReference>
<dbReference type="NCBIfam" id="TIGR00963">
    <property type="entry name" value="secA"/>
    <property type="match status" value="1"/>
</dbReference>
<dbReference type="PANTHER" id="PTHR30612:SF0">
    <property type="entry name" value="CHLOROPLAST PROTEIN-TRANSPORTING ATPASE"/>
    <property type="match status" value="1"/>
</dbReference>
<dbReference type="PANTHER" id="PTHR30612">
    <property type="entry name" value="SECA INNER MEMBRANE COMPONENT OF SEC PROTEIN SECRETION SYSTEM"/>
    <property type="match status" value="1"/>
</dbReference>
<dbReference type="Pfam" id="PF21090">
    <property type="entry name" value="P-loop_SecA"/>
    <property type="match status" value="1"/>
</dbReference>
<dbReference type="Pfam" id="PF02810">
    <property type="entry name" value="SEC-C"/>
    <property type="match status" value="1"/>
</dbReference>
<dbReference type="Pfam" id="PF07517">
    <property type="entry name" value="SecA_DEAD"/>
    <property type="match status" value="1"/>
</dbReference>
<dbReference type="Pfam" id="PF01043">
    <property type="entry name" value="SecA_PP_bind"/>
    <property type="match status" value="1"/>
</dbReference>
<dbReference type="Pfam" id="PF07516">
    <property type="entry name" value="SecA_SW"/>
    <property type="match status" value="1"/>
</dbReference>
<dbReference type="PRINTS" id="PR00906">
    <property type="entry name" value="SECA"/>
</dbReference>
<dbReference type="SMART" id="SM00957">
    <property type="entry name" value="SecA_DEAD"/>
    <property type="match status" value="1"/>
</dbReference>
<dbReference type="SMART" id="SM00958">
    <property type="entry name" value="SecA_PP_bind"/>
    <property type="match status" value="1"/>
</dbReference>
<dbReference type="SUPFAM" id="SSF81886">
    <property type="entry name" value="Helical scaffold and wing domains of SecA"/>
    <property type="match status" value="1"/>
</dbReference>
<dbReference type="SUPFAM" id="SSF52540">
    <property type="entry name" value="P-loop containing nucleoside triphosphate hydrolases"/>
    <property type="match status" value="2"/>
</dbReference>
<dbReference type="SUPFAM" id="SSF81767">
    <property type="entry name" value="Pre-protein crosslinking domain of SecA"/>
    <property type="match status" value="1"/>
</dbReference>
<dbReference type="PROSITE" id="PS01312">
    <property type="entry name" value="SECA"/>
    <property type="match status" value="1"/>
</dbReference>
<dbReference type="PROSITE" id="PS51196">
    <property type="entry name" value="SECA_MOTOR_DEAD"/>
    <property type="match status" value="1"/>
</dbReference>
<reference key="1">
    <citation type="submission" date="2007-06" db="EMBL/GenBank/DDBJ databases">
        <title>Complete sequence of Marinomonas sp. MWYL1.</title>
        <authorList>
            <consortium name="US DOE Joint Genome Institute"/>
            <person name="Copeland A."/>
            <person name="Lucas S."/>
            <person name="Lapidus A."/>
            <person name="Barry K."/>
            <person name="Glavina del Rio T."/>
            <person name="Dalin E."/>
            <person name="Tice H."/>
            <person name="Pitluck S."/>
            <person name="Kiss H."/>
            <person name="Brettin T."/>
            <person name="Bruce D."/>
            <person name="Detter J.C."/>
            <person name="Han C."/>
            <person name="Schmutz J."/>
            <person name="Larimer F."/>
            <person name="Land M."/>
            <person name="Hauser L."/>
            <person name="Kyrpides N."/>
            <person name="Kim E."/>
            <person name="Johnston A.W.B."/>
            <person name="Todd J.D."/>
            <person name="Rogers R."/>
            <person name="Wexler M."/>
            <person name="Bond P.L."/>
            <person name="Li Y."/>
            <person name="Richardson P."/>
        </authorList>
    </citation>
    <scope>NUCLEOTIDE SEQUENCE [LARGE SCALE GENOMIC DNA]</scope>
    <source>
        <strain>MWYL1</strain>
    </source>
</reference>
<evidence type="ECO:0000255" key="1">
    <source>
        <dbReference type="HAMAP-Rule" id="MF_01382"/>
    </source>
</evidence>
<evidence type="ECO:0000256" key="2">
    <source>
        <dbReference type="SAM" id="MobiDB-lite"/>
    </source>
</evidence>
<comment type="function">
    <text evidence="1">Part of the Sec protein translocase complex. Interacts with the SecYEG preprotein conducting channel. Has a central role in coupling the hydrolysis of ATP to the transfer of proteins into and across the cell membrane, serving both as a receptor for the preprotein-SecB complex and as an ATP-driven molecular motor driving the stepwise translocation of polypeptide chains across the membrane.</text>
</comment>
<comment type="catalytic activity">
    <reaction evidence="1">
        <text>ATP + H2O + cellular proteinSide 1 = ADP + phosphate + cellular proteinSide 2.</text>
        <dbReference type="EC" id="7.4.2.8"/>
    </reaction>
</comment>
<comment type="cofactor">
    <cofactor evidence="1">
        <name>Zn(2+)</name>
        <dbReference type="ChEBI" id="CHEBI:29105"/>
    </cofactor>
    <text evidence="1">May bind 1 zinc ion per subunit.</text>
</comment>
<comment type="subunit">
    <text evidence="1">Monomer and homodimer. Part of the essential Sec protein translocation apparatus which comprises SecA, SecYEG and auxiliary proteins SecDF-YajC and YidC.</text>
</comment>
<comment type="subcellular location">
    <subcellularLocation>
        <location evidence="1">Cell inner membrane</location>
        <topology evidence="1">Peripheral membrane protein</topology>
        <orientation evidence="1">Cytoplasmic side</orientation>
    </subcellularLocation>
    <subcellularLocation>
        <location evidence="1">Cytoplasm</location>
    </subcellularLocation>
    <text evidence="1">Distribution is 50-50.</text>
</comment>
<comment type="similarity">
    <text evidence="1">Belongs to the SecA family.</text>
</comment>
<keyword id="KW-0067">ATP-binding</keyword>
<keyword id="KW-0997">Cell inner membrane</keyword>
<keyword id="KW-1003">Cell membrane</keyword>
<keyword id="KW-0963">Cytoplasm</keyword>
<keyword id="KW-0472">Membrane</keyword>
<keyword id="KW-0479">Metal-binding</keyword>
<keyword id="KW-0547">Nucleotide-binding</keyword>
<keyword id="KW-0653">Protein transport</keyword>
<keyword id="KW-1278">Translocase</keyword>
<keyword id="KW-0811">Translocation</keyword>
<keyword id="KW-0813">Transport</keyword>
<keyword id="KW-0862">Zinc</keyword>
<sequence length="900" mass="102037">MLGTVIKKIVGTKNDREVKRYRKIVAQINQLEESFHKLSDDDLSGKTSEFRDRLAKGESLESILPEAFAVVREGSSRVMGMRHFDVQLIGGMVLNEGKIAEMRTGEGKTLVATLAVYLNALSSKGVHVVTVNDYLAKRDANWMRPLYEFLDMSVGVVFSGQDRDEKKAAYLCDITYGTNNEFGFDYLRDNMVFRLEDRVQRDLHFSVVDEVDSILIDEARTPLIISGAVEDSSEQYRKINQLAPLLVKQEDTDEEGSVGHYVFDESQRSIELTEDGHSFVEEWLVEQGMLAEGESLYAAGNLSLLHHVHACLKAHVIFKKNIDYVVQGDQIVIVDEHTGRTMAGRRWSEGIHQAVEAKEGVTIQAESQTLASTTFQNYFRLYEKLSGMTGTADTEAFEFQQIYGLSVIVIPTNRQVQRKDFNDLIYMSTEDKFEAIVLDIEEIVNQGRPVLVGTASIEYSELLSNYLVKKGVKHNVLNAKQHEREAEIVADAGRPGAVTIATNMAGRGTDIVLGGNLQVELAKLGENASEDEINALKADWKARNESVLAAGGLHIIGTERHESRRIDNQLRGRAGRQGDVGSSRFYLSLEDNLMRIFMSDRIKKMMMALGMEKGEAIEHKMVSNAIEKAQRKVEGRNFDIRKQLLEYDDVANDQRQVIYRQRFDMMVSEDLSEAISAMREEVVTSLVDEFIPPQSIFDMWDLEGLEEKARNEFGLELPVAKWVEEDKKLYEEPLRQKILDTFVNDYQAKEEIAGEQPFRAFEKQVLLQVLDTLWKEHLQTMDMLRQGIHLRGYAQKNPKQEYKRESFELFQGLLEQIKYEVIQIITRVKVQSAEEAEKIEAARRLQEEKTTMNMIHDSLDSLSDGGSDSADGQEYPKVGRNEPCPCGSGKKYKQCHGSLV</sequence>
<name>SECA_MARMS</name>
<feature type="chain" id="PRO_1000087321" description="Protein translocase subunit SecA">
    <location>
        <begin position="1"/>
        <end position="900"/>
    </location>
</feature>
<feature type="region of interest" description="Disordered" evidence="2">
    <location>
        <begin position="857"/>
        <end position="890"/>
    </location>
</feature>
<feature type="compositionally biased region" description="Low complexity" evidence="2">
    <location>
        <begin position="860"/>
        <end position="872"/>
    </location>
</feature>
<feature type="binding site" evidence="1">
    <location>
        <position position="87"/>
    </location>
    <ligand>
        <name>ATP</name>
        <dbReference type="ChEBI" id="CHEBI:30616"/>
    </ligand>
</feature>
<feature type="binding site" evidence="1">
    <location>
        <begin position="105"/>
        <end position="109"/>
    </location>
    <ligand>
        <name>ATP</name>
        <dbReference type="ChEBI" id="CHEBI:30616"/>
    </ligand>
</feature>
<feature type="binding site" evidence="1">
    <location>
        <position position="510"/>
    </location>
    <ligand>
        <name>ATP</name>
        <dbReference type="ChEBI" id="CHEBI:30616"/>
    </ligand>
</feature>
<feature type="binding site" evidence="1">
    <location>
        <position position="884"/>
    </location>
    <ligand>
        <name>Zn(2+)</name>
        <dbReference type="ChEBI" id="CHEBI:29105"/>
    </ligand>
</feature>
<feature type="binding site" evidence="1">
    <location>
        <position position="886"/>
    </location>
    <ligand>
        <name>Zn(2+)</name>
        <dbReference type="ChEBI" id="CHEBI:29105"/>
    </ligand>
</feature>
<feature type="binding site" evidence="1">
    <location>
        <position position="895"/>
    </location>
    <ligand>
        <name>Zn(2+)</name>
        <dbReference type="ChEBI" id="CHEBI:29105"/>
    </ligand>
</feature>
<feature type="binding site" evidence="1">
    <location>
        <position position="896"/>
    </location>
    <ligand>
        <name>Zn(2+)</name>
        <dbReference type="ChEBI" id="CHEBI:29105"/>
    </ligand>
</feature>
<proteinExistence type="inferred from homology"/>
<organism>
    <name type="scientific">Marinomonas sp. (strain MWYL1)</name>
    <dbReference type="NCBI Taxonomy" id="400668"/>
    <lineage>
        <taxon>Bacteria</taxon>
        <taxon>Pseudomonadati</taxon>
        <taxon>Pseudomonadota</taxon>
        <taxon>Gammaproteobacteria</taxon>
        <taxon>Oceanospirillales</taxon>
        <taxon>Oceanospirillaceae</taxon>
        <taxon>Marinomonas</taxon>
    </lineage>
</organism>
<gene>
    <name evidence="1" type="primary">secA</name>
    <name type="ordered locus">Mmwyl1_2607</name>
</gene>